<dbReference type="EMBL" id="AE016825">
    <property type="protein sequence ID" value="AAQ59498.1"/>
    <property type="molecule type" value="Genomic_DNA"/>
</dbReference>
<dbReference type="RefSeq" id="WP_011135376.1">
    <property type="nucleotide sequence ID" value="NC_005085.1"/>
</dbReference>
<dbReference type="SMR" id="Q7NX05"/>
<dbReference type="STRING" id="243365.CV_1824"/>
<dbReference type="GeneID" id="66367497"/>
<dbReference type="KEGG" id="cvi:CV_1824"/>
<dbReference type="eggNOG" id="COG3681">
    <property type="taxonomic scope" value="Bacteria"/>
</dbReference>
<dbReference type="HOGENOM" id="CLU_051840_0_0_4"/>
<dbReference type="OrthoDB" id="41906at2"/>
<dbReference type="Proteomes" id="UP000001424">
    <property type="component" value="Chromosome"/>
</dbReference>
<dbReference type="GO" id="GO:0080146">
    <property type="term" value="F:L-cysteine desulfhydrase activity"/>
    <property type="evidence" value="ECO:0007669"/>
    <property type="project" value="TreeGrafter"/>
</dbReference>
<dbReference type="GO" id="GO:0019450">
    <property type="term" value="P:L-cysteine catabolic process to pyruvate"/>
    <property type="evidence" value="ECO:0007669"/>
    <property type="project" value="TreeGrafter"/>
</dbReference>
<dbReference type="HAMAP" id="MF_01845">
    <property type="entry name" value="UPF0597"/>
    <property type="match status" value="1"/>
</dbReference>
<dbReference type="InterPro" id="IPR005130">
    <property type="entry name" value="Ser_deHydtase-like_asu"/>
</dbReference>
<dbReference type="InterPro" id="IPR021144">
    <property type="entry name" value="UPF0597"/>
</dbReference>
<dbReference type="PANTHER" id="PTHR30501">
    <property type="entry name" value="UPF0597 PROTEIN YHAM"/>
    <property type="match status" value="1"/>
</dbReference>
<dbReference type="PANTHER" id="PTHR30501:SF2">
    <property type="entry name" value="UPF0597 PROTEIN YHAM"/>
    <property type="match status" value="1"/>
</dbReference>
<dbReference type="Pfam" id="PF03313">
    <property type="entry name" value="SDH_alpha"/>
    <property type="match status" value="1"/>
</dbReference>
<dbReference type="PIRSF" id="PIRSF006054">
    <property type="entry name" value="UCP006054"/>
    <property type="match status" value="1"/>
</dbReference>
<gene>
    <name type="ordered locus">CV_1824</name>
</gene>
<evidence type="ECO:0000255" key="1">
    <source>
        <dbReference type="HAMAP-Rule" id="MF_01845"/>
    </source>
</evidence>
<sequence>MSEREVRLWPEFVKALKQEVVPALGCTEPISLALAAALAARELGKAPERIDAWVSANLMKNGMGVTVPGTGTVGLPIAAAVGALGGDPDAKLEVLKNLTVEQVAAGKQMLADGKVKLGVAAVPNILYAEACVWHGDECARVAIADAHTNVIKIELNGEVKLKREAADAKPVETYDLGDATARDVYDFAMRAPLDSIAFIHDAAVLNSALADEGMSGKYGLHIGATLQRQIEAGLLSEGLLSNILTRTTAASDARMGGATLPAMSNSGSGNQGIAATMPVVAVAEHVKADRETLIRALALSHLIAVYIHTRLPKLSALCAVTTASMGAAAGMAQLLNGGYPAVSMAISSMIGDLAGMICDGASNSCAMKVSTSAGSGYKAVLMALDGTRVTGNEGIVAHDVDVSIANLGKLATQGMAQTDTQILQIMMDKR</sequence>
<feature type="chain" id="PRO_0000339789" description="UPF0597 protein CV_1824">
    <location>
        <begin position="1"/>
        <end position="430"/>
    </location>
</feature>
<name>Y1824_CHRVO</name>
<keyword id="KW-1185">Reference proteome</keyword>
<organism>
    <name type="scientific">Chromobacterium violaceum (strain ATCC 12472 / DSM 30191 / JCM 1249 / CCUG 213 / NBRC 12614 / NCIMB 9131 / NCTC 9757 / MK)</name>
    <dbReference type="NCBI Taxonomy" id="243365"/>
    <lineage>
        <taxon>Bacteria</taxon>
        <taxon>Pseudomonadati</taxon>
        <taxon>Pseudomonadota</taxon>
        <taxon>Betaproteobacteria</taxon>
        <taxon>Neisseriales</taxon>
        <taxon>Chromobacteriaceae</taxon>
        <taxon>Chromobacterium</taxon>
    </lineage>
</organism>
<proteinExistence type="inferred from homology"/>
<accession>Q7NX05</accession>
<reference key="1">
    <citation type="journal article" date="2003" name="Proc. Natl. Acad. Sci. U.S.A.">
        <title>The complete genome sequence of Chromobacterium violaceum reveals remarkable and exploitable bacterial adaptability.</title>
        <authorList>
            <person name="Vasconcelos A.T.R."/>
            <person name="de Almeida D.F."/>
            <person name="Hungria M."/>
            <person name="Guimaraes C.T."/>
            <person name="Antonio R.V."/>
            <person name="Almeida F.C."/>
            <person name="de Almeida L.G.P."/>
            <person name="de Almeida R."/>
            <person name="Alves-Gomes J.A."/>
            <person name="Andrade E.M."/>
            <person name="Araripe J."/>
            <person name="de Araujo M.F.F."/>
            <person name="Astolfi-Filho S."/>
            <person name="Azevedo V."/>
            <person name="Baptista A.J."/>
            <person name="Bataus L.A.M."/>
            <person name="Batista J.S."/>
            <person name="Belo A."/>
            <person name="van den Berg C."/>
            <person name="Bogo M."/>
            <person name="Bonatto S."/>
            <person name="Bordignon J."/>
            <person name="Brigido M.M."/>
            <person name="Brito C.A."/>
            <person name="Brocchi M."/>
            <person name="Burity H.A."/>
            <person name="Camargo A.A."/>
            <person name="Cardoso D.D.P."/>
            <person name="Carneiro N.P."/>
            <person name="Carraro D.M."/>
            <person name="Carvalho C.M.B."/>
            <person name="Cascardo J.C.M."/>
            <person name="Cavada B.S."/>
            <person name="Chueire L.M.O."/>
            <person name="Creczynski-Pasa T.B."/>
            <person name="Cunha-Junior N.C."/>
            <person name="Fagundes N."/>
            <person name="Falcao C.L."/>
            <person name="Fantinatti F."/>
            <person name="Farias I.P."/>
            <person name="Felipe M.S.S."/>
            <person name="Ferrari L.P."/>
            <person name="Ferro J.A."/>
            <person name="Ferro M.I.T."/>
            <person name="Franco G.R."/>
            <person name="Freitas N.S.A."/>
            <person name="Furlan L.R."/>
            <person name="Gazzinelli R.T."/>
            <person name="Gomes E.A."/>
            <person name="Goncalves P.R."/>
            <person name="Grangeiro T.B."/>
            <person name="Grattapaglia D."/>
            <person name="Grisard E.C."/>
            <person name="Hanna E.S."/>
            <person name="Jardim S.N."/>
            <person name="Laurino J."/>
            <person name="Leoi L.C.T."/>
            <person name="Lima L.F.A."/>
            <person name="Loureiro M.F."/>
            <person name="Lyra M.C.C.P."/>
            <person name="Madeira H.M.F."/>
            <person name="Manfio G.P."/>
            <person name="Maranhao A.Q."/>
            <person name="Martins W.S."/>
            <person name="di Mauro S.M.Z."/>
            <person name="de Medeiros S.R.B."/>
            <person name="Meissner R.V."/>
            <person name="Moreira M.A.M."/>
            <person name="Nascimento F.F."/>
            <person name="Nicolas M.F."/>
            <person name="Oliveira J.G."/>
            <person name="Oliveira S.C."/>
            <person name="Paixao R.F.C."/>
            <person name="Parente J.A."/>
            <person name="Pedrosa F.O."/>
            <person name="Pena S.D.J."/>
            <person name="Pereira J.O."/>
            <person name="Pereira M."/>
            <person name="Pinto L.S.R.C."/>
            <person name="Pinto L.S."/>
            <person name="Porto J.I.R."/>
            <person name="Potrich D.P."/>
            <person name="Ramalho-Neto C.E."/>
            <person name="Reis A.M.M."/>
            <person name="Rigo L.U."/>
            <person name="Rondinelli E."/>
            <person name="Santos E.B.P."/>
            <person name="Santos F.R."/>
            <person name="Schneider M.P.C."/>
            <person name="Seuanez H.N."/>
            <person name="Silva A.M.R."/>
            <person name="da Silva A.L.C."/>
            <person name="Silva D.W."/>
            <person name="Silva R."/>
            <person name="Simoes I.C."/>
            <person name="Simon D."/>
            <person name="Soares C.M.A."/>
            <person name="Soares R.B.A."/>
            <person name="Souza E.M."/>
            <person name="Souza K.R.L."/>
            <person name="Souza R.C."/>
            <person name="Steffens M.B.R."/>
            <person name="Steindel M."/>
            <person name="Teixeira S.R."/>
            <person name="Urmenyi T."/>
            <person name="Vettore A."/>
            <person name="Wassem R."/>
            <person name="Zaha A."/>
            <person name="Simpson A.J.G."/>
        </authorList>
    </citation>
    <scope>NUCLEOTIDE SEQUENCE [LARGE SCALE GENOMIC DNA]</scope>
    <source>
        <strain>ATCC 12472 / DSM 30191 / JCM 1249 / CCUG 213 / NBRC 12614 / NCIMB 9131 / NCTC 9757 / MK</strain>
    </source>
</reference>
<protein>
    <recommendedName>
        <fullName evidence="1">UPF0597 protein CV_1824</fullName>
    </recommendedName>
</protein>
<comment type="similarity">
    <text evidence="1">Belongs to the UPF0597 family.</text>
</comment>